<accession>P16349</accession>
<name>LEC_LATSP</name>
<keyword id="KW-0903">Direct protein sequencing</keyword>
<keyword id="KW-0430">Lectin</keyword>
<dbReference type="PIR" id="S00002">
    <property type="entry name" value="LNLD"/>
</dbReference>
<dbReference type="SMR" id="P16349"/>
<dbReference type="GO" id="GO:0030246">
    <property type="term" value="F:carbohydrate binding"/>
    <property type="evidence" value="ECO:0007669"/>
    <property type="project" value="UniProtKB-KW"/>
</dbReference>
<dbReference type="CDD" id="cd06899">
    <property type="entry name" value="lectin_legume_LecRK_Arcelin_ConA"/>
    <property type="match status" value="1"/>
</dbReference>
<dbReference type="Gene3D" id="2.60.120.200">
    <property type="match status" value="1"/>
</dbReference>
<dbReference type="InterPro" id="IPR013320">
    <property type="entry name" value="ConA-like_dom_sf"/>
</dbReference>
<dbReference type="InterPro" id="IPR016363">
    <property type="entry name" value="L-lectin"/>
</dbReference>
<dbReference type="InterPro" id="IPR000985">
    <property type="entry name" value="Lectin_LegA_CS"/>
</dbReference>
<dbReference type="InterPro" id="IPR019825">
    <property type="entry name" value="Lectin_legB_Mn/Ca_BS"/>
</dbReference>
<dbReference type="InterPro" id="IPR001220">
    <property type="entry name" value="Legume_lectin_dom"/>
</dbReference>
<dbReference type="InterPro" id="IPR050258">
    <property type="entry name" value="Leguminous_Lectin"/>
</dbReference>
<dbReference type="PANTHER" id="PTHR32401">
    <property type="entry name" value="CONCANAVALIN A-LIKE LECTIN FAMILY PROTEIN"/>
    <property type="match status" value="1"/>
</dbReference>
<dbReference type="PANTHER" id="PTHR32401:SF45">
    <property type="entry name" value="LECTIN"/>
    <property type="match status" value="1"/>
</dbReference>
<dbReference type="Pfam" id="PF00139">
    <property type="entry name" value="Lectin_legB"/>
    <property type="match status" value="1"/>
</dbReference>
<dbReference type="PIRSF" id="PIRSF002690">
    <property type="entry name" value="L-type_lectin_plant"/>
    <property type="match status" value="1"/>
</dbReference>
<dbReference type="SUPFAM" id="SSF49899">
    <property type="entry name" value="Concanavalin A-like lectins/glucanases"/>
    <property type="match status" value="1"/>
</dbReference>
<dbReference type="PROSITE" id="PS00308">
    <property type="entry name" value="LECTIN_LEGUME_ALPHA"/>
    <property type="match status" value="1"/>
</dbReference>
<dbReference type="PROSITE" id="PS00307">
    <property type="entry name" value="LECTIN_LEGUME_BETA"/>
    <property type="match status" value="1"/>
</dbReference>
<proteinExistence type="evidence at protein level"/>
<organism>
    <name type="scientific">Lathyrus sphaericus</name>
    <name type="common">Spring vetchling</name>
    <dbReference type="NCBI Taxonomy" id="3861"/>
    <lineage>
        <taxon>Eukaryota</taxon>
        <taxon>Viridiplantae</taxon>
        <taxon>Streptophyta</taxon>
        <taxon>Embryophyta</taxon>
        <taxon>Tracheophyta</taxon>
        <taxon>Spermatophyta</taxon>
        <taxon>Magnoliopsida</taxon>
        <taxon>eudicotyledons</taxon>
        <taxon>Gunneridae</taxon>
        <taxon>Pentapetalae</taxon>
        <taxon>rosids</taxon>
        <taxon>fabids</taxon>
        <taxon>Fabales</taxon>
        <taxon>Fabaceae</taxon>
        <taxon>Papilionoideae</taxon>
        <taxon>50 kb inversion clade</taxon>
        <taxon>NPAAA clade</taxon>
        <taxon>Hologalegina</taxon>
        <taxon>IRL clade</taxon>
        <taxon>Fabeae</taxon>
        <taxon>Lathyrus</taxon>
    </lineage>
</organism>
<sequence length="244" mass="27313">TETETTSFSIPKTDQPSSPKFVSGQPNLIFQGNAYSTDGKLILTEAKQNTVGRALYSAPIHIWDRKTGKVADFTASFTFYIRPNSDSQVVADGFTFFIAPVDTQPRGDGGLLGVFNREEYDPTIHTVAVEFDTFHNQPWDPDYIHIGVDINSIKSRITRPWNPHYDTYSIAYIAYKAATNELDVTVTYPNSRDYATLREVVDLKQIVPEWVRVGLSASTATYYSAHEVYSWSFHSELGGTSSSN</sequence>
<evidence type="ECO:0000256" key="1">
    <source>
        <dbReference type="SAM" id="MobiDB-lite"/>
    </source>
</evidence>
<evidence type="ECO:0000305" key="2"/>
<comment type="subunit">
    <text>Homodimer. In contrast to other Lathyrus lectins which are tetramer of two alpha and two beta chains.</text>
</comment>
<comment type="similarity">
    <text evidence="2">Belongs to the leguminous lectin family.</text>
</comment>
<reference key="1">
    <citation type="journal article" date="1987" name="FEBS Lett.">
        <title>The amino acid sequence of an atypical single-chain lectin from seeds of Lathyrus sphaericus (Retz).</title>
        <authorList>
            <person name="Richardson M."/>
            <person name="Yarwood A."/>
            <person name="Rouge P."/>
        </authorList>
    </citation>
    <scope>PROTEIN SEQUENCE</scope>
    <source>
        <tissue>Seed</tissue>
    </source>
</reference>
<protein>
    <recommendedName>
        <fullName>Lectin</fullName>
    </recommendedName>
</protein>
<feature type="chain" id="PRO_0000105107" description="Lectin">
    <location>
        <begin position="1"/>
        <end position="244"/>
    </location>
</feature>
<feature type="region of interest" description="Disordered" evidence="1">
    <location>
        <begin position="1"/>
        <end position="20"/>
    </location>
</feature>
<feature type="sequence variant">
    <original>S</original>
    <variation>G</variation>
    <location>
        <position position="57"/>
    </location>
</feature>
<feature type="sequence variant">
    <original>I</original>
    <variation>S</variation>
    <location>
        <position position="98"/>
    </location>
</feature>